<accession>P32558</accession>
<accession>D6VTU8</accession>
<feature type="chain" id="PRO_0000089448" description="FACT complex subunit SPT16">
    <location>
        <begin position="1"/>
        <end position="1035"/>
    </location>
</feature>
<feature type="region of interest" description="Disordered" evidence="2">
    <location>
        <begin position="448"/>
        <end position="496"/>
    </location>
</feature>
<feature type="region of interest" description="Disordered" evidence="2">
    <location>
        <begin position="768"/>
        <end position="796"/>
    </location>
</feature>
<feature type="region of interest" description="Disordered" evidence="2">
    <location>
        <begin position="956"/>
        <end position="1035"/>
    </location>
</feature>
<feature type="coiled-coil region" evidence="1">
    <location>
        <begin position="208"/>
        <end position="234"/>
    </location>
</feature>
<feature type="coiled-coil region" evidence="1">
    <location>
        <begin position="636"/>
        <end position="666"/>
    </location>
</feature>
<feature type="coiled-coil region" evidence="1">
    <location>
        <begin position="959"/>
        <end position="983"/>
    </location>
</feature>
<feature type="compositionally biased region" description="Basic and acidic residues" evidence="2">
    <location>
        <begin position="480"/>
        <end position="496"/>
    </location>
</feature>
<feature type="compositionally biased region" description="Acidic residues" evidence="2">
    <location>
        <begin position="957"/>
        <end position="1019"/>
    </location>
</feature>
<feature type="compositionally biased region" description="Basic and acidic residues" evidence="2">
    <location>
        <begin position="1020"/>
        <end position="1035"/>
    </location>
</feature>
<feature type="modified residue" description="Phosphoserine" evidence="24">
    <location>
        <position position="526"/>
    </location>
</feature>
<feature type="modified residue" description="Phosphoserine" evidence="24">
    <location>
        <position position="765"/>
    </location>
</feature>
<feature type="mutagenesis site" description="In spt16-4; induces a spt phenotype characterized by depletion of many mRNAs; when associated with L-570." evidence="6">
    <original>P</original>
    <variation>S</variation>
    <location>
        <position position="565"/>
    </location>
</feature>
<feature type="mutagenesis site" description="In spt16-4; induces a spt phenotype characterized by depletion of many mRNAs; when associated with S-565." evidence="6">
    <original>P</original>
    <variation>L</variation>
    <location>
        <position position="570"/>
    </location>
</feature>
<feature type="mutagenesis site" description="In cdc68-1; induces a spt phenotype characterized by depletion of many mRNAs." evidence="22">
    <original>G</original>
    <variation>D</variation>
    <location>
        <position position="836"/>
    </location>
</feature>
<feature type="mutagenesis site" description="In spt16-7; induces a spt phenotype characterized by depletion of many mRNAs." evidence="6">
    <original>TTD</original>
    <variation>IIY</variation>
    <location>
        <begin position="848"/>
        <end position="850"/>
    </location>
</feature>
<feature type="mutagenesis site" description="In spt16-6; induces a spt phenotype characterized by depletion of many mRNAs." evidence="6">
    <original>P</original>
    <variation>L</variation>
    <location>
        <position position="920"/>
    </location>
</feature>
<feature type="helix" evidence="26">
    <location>
        <begin position="8"/>
        <end position="21"/>
    </location>
</feature>
<feature type="helix" evidence="26">
    <location>
        <begin position="22"/>
        <end position="24"/>
    </location>
</feature>
<feature type="strand" evidence="26">
    <location>
        <begin position="30"/>
        <end position="36"/>
    </location>
</feature>
<feature type="helix" evidence="26">
    <location>
        <begin position="47"/>
        <end position="56"/>
    </location>
</feature>
<feature type="strand" evidence="26">
    <location>
        <begin position="61"/>
        <end position="68"/>
    </location>
</feature>
<feature type="strand" evidence="26">
    <location>
        <begin position="71"/>
        <end position="77"/>
    </location>
</feature>
<feature type="helix" evidence="26">
    <location>
        <begin position="78"/>
        <end position="84"/>
    </location>
</feature>
<feature type="helix" evidence="26">
    <location>
        <begin position="85"/>
        <end position="91"/>
    </location>
</feature>
<feature type="strand" evidence="25">
    <location>
        <begin position="92"/>
        <end position="95"/>
    </location>
</feature>
<feature type="strand" evidence="26">
    <location>
        <begin position="99"/>
        <end position="105"/>
    </location>
</feature>
<feature type="helix" evidence="26">
    <location>
        <begin position="110"/>
        <end position="127"/>
    </location>
</feature>
<feature type="strand" evidence="26">
    <location>
        <begin position="129"/>
        <end position="133"/>
    </location>
</feature>
<feature type="helix" evidence="26">
    <location>
        <begin position="142"/>
        <end position="158"/>
    </location>
</feature>
<feature type="strand" evidence="26">
    <location>
        <begin position="161"/>
        <end position="164"/>
    </location>
</feature>
<feature type="helix" evidence="26">
    <location>
        <begin position="166"/>
        <end position="172"/>
    </location>
</feature>
<feature type="helix" evidence="26">
    <location>
        <begin position="178"/>
        <end position="207"/>
    </location>
</feature>
<feature type="helix" evidence="26">
    <location>
        <begin position="214"/>
        <end position="223"/>
    </location>
</feature>
<feature type="helix" evidence="26">
    <location>
        <begin position="224"/>
        <end position="226"/>
    </location>
</feature>
<feature type="helix" evidence="26">
    <location>
        <begin position="228"/>
        <end position="239"/>
    </location>
</feature>
<feature type="helix" evidence="26">
    <location>
        <begin position="250"/>
        <end position="252"/>
    </location>
</feature>
<feature type="strand" evidence="26">
    <location>
        <begin position="253"/>
        <end position="257"/>
    </location>
</feature>
<feature type="strand" evidence="26">
    <location>
        <begin position="260"/>
        <end position="262"/>
    </location>
</feature>
<feature type="strand" evidence="26">
    <location>
        <begin position="277"/>
        <end position="279"/>
    </location>
</feature>
<feature type="strand" evidence="26">
    <location>
        <begin position="283"/>
        <end position="290"/>
    </location>
</feature>
<feature type="strand" evidence="26">
    <location>
        <begin position="292"/>
        <end position="294"/>
    </location>
</feature>
<feature type="strand" evidence="26">
    <location>
        <begin position="301"/>
        <end position="308"/>
    </location>
</feature>
<feature type="helix" evidence="26">
    <location>
        <begin position="311"/>
        <end position="330"/>
    </location>
</feature>
<feature type="helix" evidence="26">
    <location>
        <begin position="338"/>
        <end position="352"/>
    </location>
</feature>
<feature type="helix" evidence="26">
    <location>
        <begin position="354"/>
        <end position="359"/>
    </location>
</feature>
<feature type="strand" evidence="26">
    <location>
        <begin position="365"/>
        <end position="367"/>
    </location>
</feature>
<feature type="strand" evidence="26">
    <location>
        <begin position="369"/>
        <end position="372"/>
    </location>
</feature>
<feature type="helix" evidence="26">
    <location>
        <begin position="375"/>
        <end position="377"/>
    </location>
</feature>
<feature type="strand" evidence="26">
    <location>
        <begin position="378"/>
        <end position="380"/>
    </location>
</feature>
<feature type="strand" evidence="26">
    <location>
        <begin position="393"/>
        <end position="403"/>
    </location>
</feature>
<feature type="turn" evidence="27">
    <location>
        <begin position="406"/>
        <end position="408"/>
    </location>
</feature>
<feature type="strand" evidence="26">
    <location>
        <begin position="412"/>
        <end position="421"/>
    </location>
</feature>
<feature type="strand" evidence="26">
    <location>
        <begin position="431"/>
        <end position="433"/>
    </location>
</feature>
<feature type="helix" evidence="26">
    <location>
        <begin position="440"/>
        <end position="443"/>
    </location>
</feature>
<feature type="strand" evidence="29">
    <location>
        <begin position="540"/>
        <end position="543"/>
    </location>
</feature>
<feature type="turn" evidence="29">
    <location>
        <begin position="557"/>
        <end position="560"/>
    </location>
</feature>
<feature type="strand" evidence="29">
    <location>
        <begin position="561"/>
        <end position="575"/>
    </location>
</feature>
<feature type="strand" evidence="29">
    <location>
        <begin position="578"/>
        <end position="586"/>
    </location>
</feature>
<feature type="strand" evidence="29">
    <location>
        <begin position="589"/>
        <end position="597"/>
    </location>
</feature>
<feature type="turn" evidence="29">
    <location>
        <begin position="599"/>
        <end position="601"/>
    </location>
</feature>
<feature type="strand" evidence="29">
    <location>
        <begin position="602"/>
        <end position="605"/>
    </location>
</feature>
<feature type="helix" evidence="29">
    <location>
        <begin position="613"/>
        <end position="616"/>
    </location>
</feature>
<feature type="strand" evidence="29">
    <location>
        <begin position="618"/>
        <end position="621"/>
    </location>
</feature>
<feature type="strand" evidence="29">
    <location>
        <begin position="625"/>
        <end position="628"/>
    </location>
</feature>
<feature type="helix" evidence="29">
    <location>
        <begin position="636"/>
        <end position="646"/>
    </location>
</feature>
<feature type="strand" evidence="28">
    <location>
        <begin position="679"/>
        <end position="686"/>
    </location>
</feature>
<feature type="strand" evidence="28">
    <location>
        <begin position="689"/>
        <end position="691"/>
    </location>
</feature>
<feature type="strand" evidence="28">
    <location>
        <begin position="696"/>
        <end position="700"/>
    </location>
</feature>
<feature type="strand" evidence="28">
    <location>
        <begin position="702"/>
        <end position="707"/>
    </location>
</feature>
<feature type="helix" evidence="28">
    <location>
        <begin position="712"/>
        <end position="714"/>
    </location>
</feature>
<feature type="strand" evidence="28">
    <location>
        <begin position="717"/>
        <end position="720"/>
    </location>
</feature>
<feature type="helix" evidence="28">
    <location>
        <begin position="721"/>
        <end position="723"/>
    </location>
</feature>
<feature type="strand" evidence="28">
    <location>
        <begin position="724"/>
        <end position="730"/>
    </location>
</feature>
<feature type="strand" evidence="28">
    <location>
        <begin position="735"/>
        <end position="750"/>
    </location>
</feature>
<feature type="strand" evidence="28">
    <location>
        <begin position="753"/>
        <end position="763"/>
    </location>
</feature>
<feature type="helix" evidence="28">
    <location>
        <begin position="790"/>
        <end position="818"/>
    </location>
</feature>
<feature type="turn" evidence="28">
    <location>
        <begin position="819"/>
        <end position="821"/>
    </location>
</feature>
<feature type="strand" evidence="28">
    <location>
        <begin position="825"/>
        <end position="827"/>
    </location>
</feature>
<feature type="helix" evidence="28">
    <location>
        <begin position="830"/>
        <end position="832"/>
    </location>
</feature>
<feature type="strand" evidence="28">
    <location>
        <begin position="834"/>
        <end position="841"/>
    </location>
</feature>
<feature type="strand" evidence="28">
    <location>
        <begin position="843"/>
        <end position="847"/>
    </location>
</feature>
<feature type="strand" evidence="28">
    <location>
        <begin position="849"/>
        <end position="854"/>
    </location>
</feature>
<feature type="strand" evidence="28">
    <location>
        <begin position="856"/>
        <end position="859"/>
    </location>
</feature>
<feature type="strand" evidence="28">
    <location>
        <begin position="861"/>
        <end position="864"/>
    </location>
</feature>
<feature type="helix" evidence="28">
    <location>
        <begin position="865"/>
        <end position="867"/>
    </location>
</feature>
<feature type="strand" evidence="28">
    <location>
        <begin position="868"/>
        <end position="874"/>
    </location>
</feature>
<feature type="strand" evidence="28">
    <location>
        <begin position="881"/>
        <end position="891"/>
    </location>
</feature>
<feature type="strand" evidence="28">
    <location>
        <begin position="897"/>
        <end position="903"/>
    </location>
</feature>
<feature type="helix" evidence="28">
    <location>
        <begin position="904"/>
        <end position="906"/>
    </location>
</feature>
<feature type="helix" evidence="28">
    <location>
        <begin position="907"/>
        <end position="916"/>
    </location>
</feature>
<feature type="strand" evidence="28">
    <location>
        <begin position="921"/>
        <end position="923"/>
    </location>
</feature>
<feature type="helix" evidence="28">
    <location>
        <begin position="931"/>
        <end position="939"/>
    </location>
</feature>
<feature type="helix" evidence="29">
    <location>
        <begin position="943"/>
        <end position="946"/>
    </location>
</feature>
<feature type="helix" evidence="29">
    <location>
        <begin position="949"/>
        <end position="953"/>
    </location>
</feature>
<keyword id="KW-0002">3D-structure</keyword>
<keyword id="KW-0010">Activator</keyword>
<keyword id="KW-0158">Chromosome</keyword>
<keyword id="KW-0175">Coiled coil</keyword>
<keyword id="KW-0227">DNA damage</keyword>
<keyword id="KW-0234">DNA repair</keyword>
<keyword id="KW-0235">DNA replication</keyword>
<keyword id="KW-0539">Nucleus</keyword>
<keyword id="KW-0597">Phosphoprotein</keyword>
<keyword id="KW-1185">Reference proteome</keyword>
<keyword id="KW-0678">Repressor</keyword>
<keyword id="KW-0804">Transcription</keyword>
<keyword id="KW-0805">Transcription regulation</keyword>
<name>SPT16_YEAST</name>
<evidence type="ECO:0000255" key="1"/>
<evidence type="ECO:0000256" key="2">
    <source>
        <dbReference type="SAM" id="MobiDB-lite"/>
    </source>
</evidence>
<evidence type="ECO:0000269" key="3">
    <source>
    </source>
</evidence>
<evidence type="ECO:0000269" key="4">
    <source>
    </source>
</evidence>
<evidence type="ECO:0000269" key="5">
    <source>
    </source>
</evidence>
<evidence type="ECO:0000269" key="6">
    <source>
    </source>
</evidence>
<evidence type="ECO:0000269" key="7">
    <source>
    </source>
</evidence>
<evidence type="ECO:0000269" key="8">
    <source>
    </source>
</evidence>
<evidence type="ECO:0000269" key="9">
    <source>
    </source>
</evidence>
<evidence type="ECO:0000269" key="10">
    <source>
    </source>
</evidence>
<evidence type="ECO:0000269" key="11">
    <source>
    </source>
</evidence>
<evidence type="ECO:0000269" key="12">
    <source>
    </source>
</evidence>
<evidence type="ECO:0000269" key="13">
    <source>
    </source>
</evidence>
<evidence type="ECO:0000269" key="14">
    <source>
    </source>
</evidence>
<evidence type="ECO:0000269" key="15">
    <source>
    </source>
</evidence>
<evidence type="ECO:0000269" key="16">
    <source>
    </source>
</evidence>
<evidence type="ECO:0000269" key="17">
    <source>
    </source>
</evidence>
<evidence type="ECO:0000269" key="18">
    <source>
    </source>
</evidence>
<evidence type="ECO:0000269" key="19">
    <source>
    </source>
</evidence>
<evidence type="ECO:0000269" key="20">
    <source>
    </source>
</evidence>
<evidence type="ECO:0000269" key="21">
    <source>
    </source>
</evidence>
<evidence type="ECO:0000269" key="22">
    <source>
    </source>
</evidence>
<evidence type="ECO:0000305" key="23"/>
<evidence type="ECO:0007744" key="24">
    <source>
    </source>
</evidence>
<evidence type="ECO:0007829" key="25">
    <source>
        <dbReference type="PDB" id="3BIP"/>
    </source>
</evidence>
<evidence type="ECO:0007829" key="26">
    <source>
        <dbReference type="PDB" id="3BIQ"/>
    </source>
</evidence>
<evidence type="ECO:0007829" key="27">
    <source>
        <dbReference type="PDB" id="3BIT"/>
    </source>
</evidence>
<evidence type="ECO:0007829" key="28">
    <source>
        <dbReference type="PDB" id="4IOY"/>
    </source>
</evidence>
<evidence type="ECO:0007829" key="29">
    <source>
        <dbReference type="PDB" id="7NKY"/>
    </source>
</evidence>
<sequence length="1035" mass="118630">MEELNIDFDVFKKRIELLYSKYNEFEGSPNSLLFVLGSSNAENPYQKTTILHNWLLSYEFPATLIALVPGKVIIITSSAKAKHLQKAIDLFKDPESKITLELWQRNNKEPELNKKLFDDVIALINSAGKTVGIPEKDSYQGKFMTEWNPVWEAAVKENEFNVIDISLGLSKVWEVKDVNEQAFLSVSSKGSDKFMDLLSNEMVRAVDEELKITNAKLSDKIENKIDDVKFLKQLSPDLSALCPPNYKFNFDLLDWTYSPIIQSGKKFDLRVSARSTNDQLYGNGCILASCGIRYNNYCSNITRTFLIDPSEEMANNYDFLLTLQKEIVTNILKPGRTPKEVYESVIEYIEKTKPELVPNFTKNIGSLIGLEFRDSNFILNVKNDYRKIQRGDCFNISFGFNNLKDSQSANNYALQLADTVQIPLDETEPPRFLTNYTKAKSQISFYFNNEEEDNNKKKSSPATKVPSKPDRNSKILRTKLRGEARGGAEDAQKEQIRKENQKKLHEKLEKNGLLRFSAADANGPDSEPRQYFKKYESYVRDSQLPTNIRDLRIHVDWKSQTIILPIYGRPVPFHINSYKNGSKNEEGEYTYLRLNFNSPGSSGGISKKVEELPYEESADNQFVRSITLRSKDGDRMSETFKQIADLKKEATKREQERKALADVVQQDKLIENKTGRTKRLDQIFVRPNPDTKRVPSTVFIHENGIRFQSPLRTDSRIDILFSNIKNLIFQSCKGELIVVIHIHLKNPILMGKKKIQDVQFYREASDMSVDETGGGRRGQSRFRRYGDEDELEQEQEERRKRAALDKEFKYFADAIAEASNGLLTVENTFRDLGFQGVPNRSAVFCMPTTDCLVQLIEPPFLVINLEEVEICILERVQFGLKNFDMVFVYKDFNKPVTHINTVPIESLDFLKQWLTDMDIPYTVSTINLNWATIMKSLQDDPYQFFLDGGWNFLATGSDDEASDESEEEVSEYEASEDDVSDESAFSEDEEGSEVDDDISGDESEDYTGDESEEGEDWDELEKKAARADRGANFRD</sequence>
<proteinExistence type="evidence at protein level"/>
<dbReference type="EMBL" id="M73533">
    <property type="status" value="NOT_ANNOTATED_CDS"/>
    <property type="molecule type" value="Genomic_DNA"/>
</dbReference>
<dbReference type="EMBL" id="Z72729">
    <property type="protein sequence ID" value="CAA96920.1"/>
    <property type="molecule type" value="Genomic_DNA"/>
</dbReference>
<dbReference type="EMBL" id="M27174">
    <property type="status" value="NOT_ANNOTATED_CDS"/>
    <property type="molecule type" value="Genomic_DNA"/>
</dbReference>
<dbReference type="EMBL" id="BK006941">
    <property type="protein sequence ID" value="DAA07909.1"/>
    <property type="molecule type" value="Genomic_DNA"/>
</dbReference>
<dbReference type="PIR" id="S18512">
    <property type="entry name" value="S18512"/>
</dbReference>
<dbReference type="RefSeq" id="NP_011308.1">
    <property type="nucleotide sequence ID" value="NM_001181072.1"/>
</dbReference>
<dbReference type="PDB" id="3BIP">
    <property type="method" value="X-ray"/>
    <property type="resolution" value="1.94 A"/>
    <property type="chains" value="A/B=1-465"/>
</dbReference>
<dbReference type="PDB" id="3BIQ">
    <property type="method" value="X-ray"/>
    <property type="resolution" value="1.73 A"/>
    <property type="chains" value="A=1-465"/>
</dbReference>
<dbReference type="PDB" id="3BIT">
    <property type="method" value="X-ray"/>
    <property type="resolution" value="1.90 A"/>
    <property type="chains" value="A/B=1-451"/>
</dbReference>
<dbReference type="PDB" id="4IOY">
    <property type="method" value="X-ray"/>
    <property type="resolution" value="1.94 A"/>
    <property type="chains" value="X=675-958"/>
</dbReference>
<dbReference type="PDB" id="4WNN">
    <property type="method" value="X-ray"/>
    <property type="resolution" value="1.80 A"/>
    <property type="chains" value="T=958-972"/>
</dbReference>
<dbReference type="PDB" id="7NKY">
    <property type="method" value="EM"/>
    <property type="resolution" value="3.20 A"/>
    <property type="chains" value="Q=1-1035"/>
</dbReference>
<dbReference type="PDB" id="8XGC">
    <property type="method" value="EM"/>
    <property type="resolution" value="3.70 A"/>
    <property type="chains" value="L=1-1035"/>
</dbReference>
<dbReference type="PDBsum" id="3BIP"/>
<dbReference type="PDBsum" id="3BIQ"/>
<dbReference type="PDBsum" id="3BIT"/>
<dbReference type="PDBsum" id="4IOY"/>
<dbReference type="PDBsum" id="4WNN"/>
<dbReference type="PDBsum" id="7NKY"/>
<dbReference type="PDBsum" id="8XGC"/>
<dbReference type="EMDB" id="EMD-12450"/>
<dbReference type="EMDB" id="EMD-38317"/>
<dbReference type="SMR" id="P32558"/>
<dbReference type="BioGRID" id="33049">
    <property type="interactions" value="526"/>
</dbReference>
<dbReference type="ComplexPortal" id="CPX-3215">
    <property type="entry name" value="FACT complex"/>
</dbReference>
<dbReference type="DIP" id="DIP-2546N"/>
<dbReference type="FunCoup" id="P32558">
    <property type="interactions" value="1711"/>
</dbReference>
<dbReference type="IntAct" id="P32558">
    <property type="interactions" value="130"/>
</dbReference>
<dbReference type="MINT" id="P32558"/>
<dbReference type="STRING" id="4932.YGL207W"/>
<dbReference type="iPTMnet" id="P32558"/>
<dbReference type="PaxDb" id="4932-YGL207W"/>
<dbReference type="PeptideAtlas" id="P32558"/>
<dbReference type="DNASU" id="852665"/>
<dbReference type="EnsemblFungi" id="YGL207W_mRNA">
    <property type="protein sequence ID" value="YGL207W"/>
    <property type="gene ID" value="YGL207W"/>
</dbReference>
<dbReference type="GeneID" id="852665"/>
<dbReference type="KEGG" id="sce:YGL207W"/>
<dbReference type="AGR" id="SGD:S000003175"/>
<dbReference type="SGD" id="S000003175">
    <property type="gene designation" value="SPT16"/>
</dbReference>
<dbReference type="VEuPathDB" id="FungiDB:YGL207W"/>
<dbReference type="eggNOG" id="KOG1189">
    <property type="taxonomic scope" value="Eukaryota"/>
</dbReference>
<dbReference type="GeneTree" id="ENSGT00390000014495"/>
<dbReference type="HOGENOM" id="CLU_004627_1_0_1"/>
<dbReference type="InParanoid" id="P32558"/>
<dbReference type="OMA" id="YHINTIP"/>
<dbReference type="OrthoDB" id="10251642at2759"/>
<dbReference type="BioCyc" id="YEAST:G3O-30684-MONOMER"/>
<dbReference type="Reactome" id="R-SCE-674695">
    <property type="pathway name" value="RNA Polymerase II Pre-transcription Events"/>
</dbReference>
<dbReference type="Reactome" id="R-SCE-6796648">
    <property type="pathway name" value="TP53 Regulates Transcription of DNA Repair Genes"/>
</dbReference>
<dbReference type="Reactome" id="R-SCE-6804756">
    <property type="pathway name" value="Regulation of TP53 Activity through Phosphorylation"/>
</dbReference>
<dbReference type="BioGRID-ORCS" id="852665">
    <property type="hits" value="3 hits in 10 CRISPR screens"/>
</dbReference>
<dbReference type="CD-CODE" id="E03F929F">
    <property type="entry name" value="Stress granule"/>
</dbReference>
<dbReference type="EvolutionaryTrace" id="P32558"/>
<dbReference type="PRO" id="PR:P32558"/>
<dbReference type="Proteomes" id="UP000002311">
    <property type="component" value="Chromosome VII"/>
</dbReference>
<dbReference type="RNAct" id="P32558">
    <property type="molecule type" value="protein"/>
</dbReference>
<dbReference type="GO" id="GO:0000785">
    <property type="term" value="C:chromatin"/>
    <property type="evidence" value="ECO:0000314"/>
    <property type="project" value="SGD"/>
</dbReference>
<dbReference type="GO" id="GO:0035101">
    <property type="term" value="C:FACT complex"/>
    <property type="evidence" value="ECO:0000316"/>
    <property type="project" value="SGD"/>
</dbReference>
<dbReference type="GO" id="GO:0006325">
    <property type="term" value="P:chromatin organization"/>
    <property type="evidence" value="ECO:0000314"/>
    <property type="project" value="SGD"/>
</dbReference>
<dbReference type="GO" id="GO:0006281">
    <property type="term" value="P:DNA repair"/>
    <property type="evidence" value="ECO:0007669"/>
    <property type="project" value="UniProtKB-KW"/>
</dbReference>
<dbReference type="GO" id="GO:0006261">
    <property type="term" value="P:DNA-templated DNA replication"/>
    <property type="evidence" value="ECO:0000353"/>
    <property type="project" value="SGD"/>
</dbReference>
<dbReference type="GO" id="GO:0006334">
    <property type="term" value="P:nucleosome assembly"/>
    <property type="evidence" value="ECO:0000314"/>
    <property type="project" value="SGD"/>
</dbReference>
<dbReference type="GO" id="GO:0034728">
    <property type="term" value="P:nucleosome organization"/>
    <property type="evidence" value="ECO:0000303"/>
    <property type="project" value="ComplexPortal"/>
</dbReference>
<dbReference type="GO" id="GO:0045899">
    <property type="term" value="P:positive regulation of RNA polymerase II transcription preinitiation complex assembly"/>
    <property type="evidence" value="ECO:0000314"/>
    <property type="project" value="SGD"/>
</dbReference>
<dbReference type="GO" id="GO:0060261">
    <property type="term" value="P:positive regulation of transcription initiation by RNA polymerase II"/>
    <property type="evidence" value="ECO:0000315"/>
    <property type="project" value="SGD"/>
</dbReference>
<dbReference type="GO" id="GO:1902275">
    <property type="term" value="P:regulation of chromatin organization"/>
    <property type="evidence" value="ECO:0000303"/>
    <property type="project" value="ComplexPortal"/>
</dbReference>
<dbReference type="GO" id="GO:0007063">
    <property type="term" value="P:regulation of sister chromatid cohesion"/>
    <property type="evidence" value="ECO:0000314"/>
    <property type="project" value="SGD"/>
</dbReference>
<dbReference type="GO" id="GO:0006368">
    <property type="term" value="P:transcription elongation by RNA polymerase II"/>
    <property type="evidence" value="ECO:0000318"/>
    <property type="project" value="GO_Central"/>
</dbReference>
<dbReference type="CDD" id="cd01091">
    <property type="entry name" value="CDC68-like"/>
    <property type="match status" value="1"/>
</dbReference>
<dbReference type="FunFam" id="2.30.29.150:FF:000002">
    <property type="entry name" value="FACT complex subunit SPT16"/>
    <property type="match status" value="1"/>
</dbReference>
<dbReference type="FunFam" id="2.30.29.30:FF:000017">
    <property type="entry name" value="FACT complex subunit SPT16"/>
    <property type="match status" value="1"/>
</dbReference>
<dbReference type="FunFam" id="3.40.350.10:FF:000006">
    <property type="entry name" value="FACT complex subunit SPT16"/>
    <property type="match status" value="1"/>
</dbReference>
<dbReference type="FunFam" id="2.30.29.210:FF:000001">
    <property type="entry name" value="FACT complex subunit spt16"/>
    <property type="match status" value="1"/>
</dbReference>
<dbReference type="FunFam" id="3.90.230.10:FF:000005">
    <property type="entry name" value="FACT complex subunit spt16"/>
    <property type="match status" value="1"/>
</dbReference>
<dbReference type="Gene3D" id="2.30.29.150">
    <property type="match status" value="1"/>
</dbReference>
<dbReference type="Gene3D" id="3.90.230.10">
    <property type="entry name" value="Creatinase/methionine aminopeptidase superfamily"/>
    <property type="match status" value="1"/>
</dbReference>
<dbReference type="Gene3D" id="3.40.350.10">
    <property type="entry name" value="Creatinase/prolidase N-terminal domain"/>
    <property type="match status" value="1"/>
</dbReference>
<dbReference type="Gene3D" id="2.30.29.210">
    <property type="entry name" value="FACT complex subunit Spt16p/Cdc68p"/>
    <property type="match status" value="1"/>
</dbReference>
<dbReference type="Gene3D" id="2.30.29.30">
    <property type="entry name" value="Pleckstrin-homology domain (PH domain)/Phosphotyrosine-binding domain (PTB)"/>
    <property type="match status" value="1"/>
</dbReference>
<dbReference type="IDEAL" id="IID50313"/>
<dbReference type="InterPro" id="IPR029149">
    <property type="entry name" value="Creatin/AminoP/Spt16_N"/>
</dbReference>
<dbReference type="InterPro" id="IPR036005">
    <property type="entry name" value="Creatinase/aminopeptidase-like"/>
</dbReference>
<dbReference type="InterPro" id="IPR029148">
    <property type="entry name" value="FACT-SPT16_Nlobe"/>
</dbReference>
<dbReference type="InterPro" id="IPR056595">
    <property type="entry name" value="Fact-SPT16_PH"/>
</dbReference>
<dbReference type="InterPro" id="IPR048969">
    <property type="entry name" value="FACT_SPT16_C"/>
</dbReference>
<dbReference type="InterPro" id="IPR013953">
    <property type="entry name" value="FACT_SPT16_M"/>
</dbReference>
<dbReference type="InterPro" id="IPR000994">
    <property type="entry name" value="Pept_M24"/>
</dbReference>
<dbReference type="InterPro" id="IPR011993">
    <property type="entry name" value="PH-like_dom_sf"/>
</dbReference>
<dbReference type="InterPro" id="IPR013719">
    <property type="entry name" value="RTT106/SPT16-like_middle_dom"/>
</dbReference>
<dbReference type="InterPro" id="IPR040258">
    <property type="entry name" value="Spt16"/>
</dbReference>
<dbReference type="InterPro" id="IPR033825">
    <property type="entry name" value="Spt16_M24"/>
</dbReference>
<dbReference type="PANTHER" id="PTHR13980">
    <property type="entry name" value="CDC68 RELATED"/>
    <property type="match status" value="1"/>
</dbReference>
<dbReference type="PANTHER" id="PTHR13980:SF15">
    <property type="entry name" value="FACT COMPLEX SUBUNIT SPT16"/>
    <property type="match status" value="1"/>
</dbReference>
<dbReference type="Pfam" id="PF14826">
    <property type="entry name" value="FACT-Spt16_Nlob"/>
    <property type="match status" value="1"/>
</dbReference>
<dbReference type="Pfam" id="PF00557">
    <property type="entry name" value="Peptidase_M24"/>
    <property type="match status" value="1"/>
</dbReference>
<dbReference type="Pfam" id="PF24824">
    <property type="entry name" value="PH_SPT16"/>
    <property type="match status" value="1"/>
</dbReference>
<dbReference type="Pfam" id="PF08512">
    <property type="entry name" value="Rttp106-like_middle"/>
    <property type="match status" value="1"/>
</dbReference>
<dbReference type="Pfam" id="PF08644">
    <property type="entry name" value="SPT16"/>
    <property type="match status" value="1"/>
</dbReference>
<dbReference type="Pfam" id="PF21091">
    <property type="entry name" value="SPT16_C"/>
    <property type="match status" value="1"/>
</dbReference>
<dbReference type="SMART" id="SM01285">
    <property type="entry name" value="FACT-Spt16_Nlob"/>
    <property type="match status" value="1"/>
</dbReference>
<dbReference type="SMART" id="SM01287">
    <property type="entry name" value="Rtt106"/>
    <property type="match status" value="1"/>
</dbReference>
<dbReference type="SMART" id="SM01286">
    <property type="entry name" value="SPT16"/>
    <property type="match status" value="1"/>
</dbReference>
<dbReference type="SUPFAM" id="SSF55920">
    <property type="entry name" value="Creatinase/aminopeptidase"/>
    <property type="match status" value="1"/>
</dbReference>
<comment type="function">
    <text evidence="3 6 9 11 14 16 17">Component of the FACT complex, a general chromatin factor that acts to reorganize nucleosomes. The FACT complex is involved in multiple processes that require DNA as a template such as mRNA elongation, DNA replication and DNA repair. During transcription elongation the FACT complex acts as a histone chaperone that both destabilizes and restores nucleosomal structure. It facilitates the passage of RNA polymerase II and transcription by promoting the dissociation of one histone H2A-H2B dimer from the nucleosome, then subsequently promotes the reestablishment of the nucleosome following the passage of RNA polymerase II. Transcription elongation is promoted by the repression of transcription initiation from cryptic sites. Also acts in establishing transcription initiation complexes and promotes SPT15/TBP-binding to a TATA box. Together with replication factor-A protein (RPA), FACT may play a role in nucleosome deposition during DNA replication.</text>
</comment>
<comment type="subunit">
    <text evidence="3 4 5 6 7 8 10 12 19 20 21 22">Forms a stable heterodimer with POB3 (PubMed:10413469, PubMed:9705338, PubMed:9832518). The SPT16-POB3 dimer weakly associates with multiple molecules of NHP6 (NHP6A or NHP6B) to form the FACT (yFACT or SNP) complex (PubMed:11313475, PubMed:11432837, PubMed:12952948). The FACT complex interacts with the CK2 (casein kinase II) complex subunits CKA1, CKA2, CKB1 and CKB2 and the components of the transcription machinery CHD1, CTR9, PAF1 and CDC73 (PubMed:12242279, PubMed:12682017). The FACT complex interacts with the PAF1 complex (PubMed:11927560). Interacts with POL1 (PubMed:9199353). Interacts with SAS3 (PubMed:10817755). Interacts with YTA7 (PubMed:22156209).</text>
</comment>
<comment type="interaction">
    <interactant intactId="EBI-4334">
        <id>P32558</id>
    </interactant>
    <interactant intactId="EBI-27863">
        <id>Q04636</id>
        <label>POB3</label>
    </interactant>
    <organismsDiffer>false</organismsDiffer>
    <experiments>9</experiments>
</comment>
<comment type="interaction">
    <interactant intactId="EBI-4334">
        <id>P32558</id>
    </interactant>
    <interactant intactId="EBI-16484">
        <id>P34218</id>
        <label>SAS3</label>
    </interactant>
    <organismsDiffer>false</organismsDiffer>
    <experiments>2</experiments>
</comment>
<comment type="interaction">
    <interactant intactId="EBI-4334">
        <id>P32558</id>
    </interactant>
    <interactant intactId="EBI-17402">
        <id>P32908</id>
        <label>SMC1</label>
    </interactant>
    <organismsDiffer>false</organismsDiffer>
    <experiments>2</experiments>
</comment>
<comment type="subcellular location">
    <subcellularLocation>
        <location evidence="3">Nucleus</location>
    </subcellularLocation>
    <subcellularLocation>
        <location evidence="3">Chromosome</location>
    </subcellularLocation>
    <text evidence="3 14 15 18">Colocalizes with RNA polymerase II on chromatin (PubMed:10413469, PubMed:14585989, PubMed:14739930). Recruited to actively transcribed loci (PubMed:14585989). Associates with the coding region of HTA1 (PubMed:19683497).</text>
</comment>
<comment type="miscellaneous">
    <text evidence="13">Present with 18500 molecules/cell in log phase SD medium.</text>
</comment>
<comment type="similarity">
    <text evidence="23">Belongs to the peptidase M24 family. SPT16 subfamily.</text>
</comment>
<comment type="caution">
    <text evidence="23">Although related to the peptidase M24 family, this protein lacks conserved active site residues suggesting that it may lack peptidase activity.</text>
</comment>
<organism>
    <name type="scientific">Saccharomyces cerevisiae (strain ATCC 204508 / S288c)</name>
    <name type="common">Baker's yeast</name>
    <dbReference type="NCBI Taxonomy" id="559292"/>
    <lineage>
        <taxon>Eukaryota</taxon>
        <taxon>Fungi</taxon>
        <taxon>Dikarya</taxon>
        <taxon>Ascomycota</taxon>
        <taxon>Saccharomycotina</taxon>
        <taxon>Saccharomycetes</taxon>
        <taxon>Saccharomycetales</taxon>
        <taxon>Saccharomycetaceae</taxon>
        <taxon>Saccharomyces</taxon>
    </lineage>
</organism>
<gene>
    <name type="primary">SPT16</name>
    <name type="synonym">CDC68</name>
    <name type="synonym">SSF1</name>
    <name type="ordered locus">YGL207W</name>
</gene>
<protein>
    <recommendedName>
        <fullName>FACT complex subunit SPT16</fullName>
    </recommendedName>
    <alternativeName>
        <fullName>Cell division control protein 68</fullName>
    </alternativeName>
    <alternativeName>
        <fullName>Facilitates chromatin transcription complex subunit SPT16</fullName>
    </alternativeName>
    <alternativeName>
        <fullName>Suppressor of Ty protein 16</fullName>
    </alternativeName>
</protein>
<reference key="1">
    <citation type="journal article" date="1991" name="Mol. Cell. Biol.">
        <title>CDC68, a yeast gene that affects regulation of cell proliferation and transcription, encodes a protein with a highly acidic carboxyl terminus.</title>
        <authorList>
            <person name="Rowley A."/>
            <person name="Singer R.A."/>
            <person name="Johnston G.C."/>
        </authorList>
    </citation>
    <scope>NUCLEOTIDE SEQUENCE [GENOMIC DNA]</scope>
</reference>
<reference key="2">
    <citation type="journal article" date="1991" name="Mol. Cell. Biol.">
        <title>Mutations in SPT16/CDC68 suppress cis- and trans-acting mutations that affect promoter function in Saccharomyces cerevisiae.</title>
        <authorList>
            <person name="Malone E.A."/>
            <person name="Clark C.D."/>
            <person name="Chiang A."/>
            <person name="Winston F."/>
        </authorList>
    </citation>
    <scope>NUCLEOTIDE SEQUENCE [GENOMIC DNA]</scope>
</reference>
<reference key="3">
    <citation type="journal article" date="1997" name="Yeast">
        <title>Analysis of 21.7 kb DNA sequence from the left arm of chromosome VII reveals 11 open reading frames: two correspond to new genes.</title>
        <authorList>
            <person name="Feuermann M."/>
            <person name="Simeonava L."/>
            <person name="Souciet J.-L."/>
            <person name="Potier S."/>
        </authorList>
    </citation>
    <scope>NUCLEOTIDE SEQUENCE [GENOMIC DNA]</scope>
</reference>
<reference key="4">
    <citation type="journal article" date="1997" name="Nature">
        <title>The nucleotide sequence of Saccharomyces cerevisiae chromosome VII.</title>
        <authorList>
            <person name="Tettelin H."/>
            <person name="Agostoni-Carbone M.L."/>
            <person name="Albermann K."/>
            <person name="Albers M."/>
            <person name="Arroyo J."/>
            <person name="Backes U."/>
            <person name="Barreiros T."/>
            <person name="Bertani I."/>
            <person name="Bjourson A.J."/>
            <person name="Brueckner M."/>
            <person name="Bruschi C.V."/>
            <person name="Carignani G."/>
            <person name="Castagnoli L."/>
            <person name="Cerdan E."/>
            <person name="Clemente M.L."/>
            <person name="Coblenz A."/>
            <person name="Coglievina M."/>
            <person name="Coissac E."/>
            <person name="Defoor E."/>
            <person name="Del Bino S."/>
            <person name="Delius H."/>
            <person name="Delneri D."/>
            <person name="de Wergifosse P."/>
            <person name="Dujon B."/>
            <person name="Durand P."/>
            <person name="Entian K.-D."/>
            <person name="Eraso P."/>
            <person name="Escribano V."/>
            <person name="Fabiani L."/>
            <person name="Fartmann B."/>
            <person name="Feroli F."/>
            <person name="Feuermann M."/>
            <person name="Frontali L."/>
            <person name="Garcia-Gonzalez M."/>
            <person name="Garcia-Saez M.I."/>
            <person name="Goffeau A."/>
            <person name="Guerreiro P."/>
            <person name="Hani J."/>
            <person name="Hansen M."/>
            <person name="Hebling U."/>
            <person name="Hernandez K."/>
            <person name="Heumann K."/>
            <person name="Hilger F."/>
            <person name="Hofmann B."/>
            <person name="Indge K.J."/>
            <person name="James C.M."/>
            <person name="Klima R."/>
            <person name="Koetter P."/>
            <person name="Kramer B."/>
            <person name="Kramer W."/>
            <person name="Lauquin G."/>
            <person name="Leuther H."/>
            <person name="Louis E.J."/>
            <person name="Maillier E."/>
            <person name="Marconi A."/>
            <person name="Martegani E."/>
            <person name="Mazon M.J."/>
            <person name="Mazzoni C."/>
            <person name="McReynolds A.D.K."/>
            <person name="Melchioretto P."/>
            <person name="Mewes H.-W."/>
            <person name="Minenkova O."/>
            <person name="Mueller-Auer S."/>
            <person name="Nawrocki A."/>
            <person name="Netter P."/>
            <person name="Neu R."/>
            <person name="Nombela C."/>
            <person name="Oliver S.G."/>
            <person name="Panzeri L."/>
            <person name="Paoluzi S."/>
            <person name="Plevani P."/>
            <person name="Portetelle D."/>
            <person name="Portillo F."/>
            <person name="Potier S."/>
            <person name="Purnelle B."/>
            <person name="Rieger M."/>
            <person name="Riles L."/>
            <person name="Rinaldi T."/>
            <person name="Robben J."/>
            <person name="Rodrigues-Pousada C."/>
            <person name="Rodriguez-Belmonte E."/>
            <person name="Rodriguez-Torres A.M."/>
            <person name="Rose M."/>
            <person name="Ruzzi M."/>
            <person name="Saliola M."/>
            <person name="Sanchez-Perez M."/>
            <person name="Schaefer B."/>
            <person name="Schaefer M."/>
            <person name="Scharfe M."/>
            <person name="Schmidheini T."/>
            <person name="Schreer A."/>
            <person name="Skala J."/>
            <person name="Souciet J.-L."/>
            <person name="Steensma H.Y."/>
            <person name="Talla E."/>
            <person name="Thierry A."/>
            <person name="Vandenbol M."/>
            <person name="van der Aart Q.J.M."/>
            <person name="Van Dyck L."/>
            <person name="Vanoni M."/>
            <person name="Verhasselt P."/>
            <person name="Voet M."/>
            <person name="Volckaert G."/>
            <person name="Wambutt R."/>
            <person name="Watson M.D."/>
            <person name="Weber N."/>
            <person name="Wedler E."/>
            <person name="Wedler H."/>
            <person name="Wipfli P."/>
            <person name="Wolf K."/>
            <person name="Wright L.F."/>
            <person name="Zaccaria P."/>
            <person name="Zimmermann M."/>
            <person name="Zollner A."/>
            <person name="Kleine K."/>
        </authorList>
    </citation>
    <scope>NUCLEOTIDE SEQUENCE [LARGE SCALE GENOMIC DNA]</scope>
    <source>
        <strain>ATCC 204508 / S288c</strain>
    </source>
</reference>
<reference key="5">
    <citation type="journal article" date="2014" name="G3 (Bethesda)">
        <title>The reference genome sequence of Saccharomyces cerevisiae: Then and now.</title>
        <authorList>
            <person name="Engel S.R."/>
            <person name="Dietrich F.S."/>
            <person name="Fisk D.G."/>
            <person name="Binkley G."/>
            <person name="Balakrishnan R."/>
            <person name="Costanzo M.C."/>
            <person name="Dwight S.S."/>
            <person name="Hitz B.C."/>
            <person name="Karra K."/>
            <person name="Nash R.S."/>
            <person name="Weng S."/>
            <person name="Wong E.D."/>
            <person name="Lloyd P."/>
            <person name="Skrzypek M.S."/>
            <person name="Miyasato S.R."/>
            <person name="Simison M."/>
            <person name="Cherry J.M."/>
        </authorList>
    </citation>
    <scope>GENOME REANNOTATION</scope>
    <source>
        <strain>ATCC 204508 / S288c</strain>
    </source>
</reference>
<reference key="6">
    <citation type="journal article" date="1989" name="Gene">
        <title>Organization of the yeast URA2 gene: identification of a defective dihydroorotase-like domain in the multifunctional carbamoylphosphate synthetase-aspartate transcarbamylase complex.</title>
        <authorList>
            <person name="Souciet J.-L."/>
            <person name="Nagy M."/>
            <person name="le Gouar M."/>
            <person name="Lacroute F."/>
            <person name="Potier S."/>
        </authorList>
    </citation>
    <scope>NUCLEOTIDE SEQUENCE [GENOMIC DNA] OF 1-158</scope>
    <source>
        <strain>ATCC 28383 / FL100 / VTT C-80102</strain>
    </source>
</reference>
<reference key="7">
    <citation type="journal article" date="1997" name="Mol. Cell. Biol.">
        <title>The Saccharomyces cerevisiae DNA polymerase alpha catalytic subunit interacts with Cdc68/Spt16 and with Pob3, a protein similar to an HMG1-like protein.</title>
        <authorList>
            <person name="Wittmeyer J."/>
            <person name="Formosa T."/>
        </authorList>
    </citation>
    <scope>INTERACTION WITH POL1</scope>
</reference>
<reference key="8">
    <citation type="journal article" date="1998" name="Genetics">
        <title>The yeast protein complex containing cdc68 and pob3 mediates core-promoter repression through the cdc68 N-terminal domain.</title>
        <authorList>
            <person name="Evans D.R.H."/>
            <person name="Brewster N.K."/>
            <person name="Xu Q."/>
            <person name="Rowley A."/>
            <person name="Altheim B.A."/>
            <person name="Johnston G.C."/>
            <person name="Singer R.A."/>
        </authorList>
    </citation>
    <scope>INTERACTION WITH POB3</scope>
    <scope>MUTAGENESIS OF GLY-836</scope>
</reference>
<reference key="9">
    <citation type="journal article" date="1998" name="J. Biol. Chem.">
        <title>Characterization of the CP complex, an abundant dimer of Cdc68 and Pob3 proteins that regulates yeast transcriptional activation and chromatin repression.</title>
        <authorList>
            <person name="Brewster N.K."/>
            <person name="Johnston G.C."/>
            <person name="Singer R.A."/>
        </authorList>
    </citation>
    <scope>INTERACTION WITH POB3</scope>
</reference>
<reference key="10">
    <citation type="journal article" date="1999" name="Biochemistry">
        <title>Spt16 and Pob3 of Saccharomyces cerevisiae form an essential, abundant heterodimer that is nuclear, chromatin-associated, and copurifies with DNA polymerase alpha.</title>
        <authorList>
            <person name="Wittmeyer J."/>
            <person name="Joss L."/>
            <person name="Formosa T."/>
        </authorList>
    </citation>
    <scope>FUNCTION</scope>
    <scope>INTERACTION WITH POB3</scope>
    <scope>SUBCELLULAR LOCATION</scope>
</reference>
<reference key="11">
    <citation type="journal article" date="2000" name="Genes Dev.">
        <title>The something about silencing protein, Sas3, is the catalytic subunit of NuA3, a yTAF(II)30-containing HAT complex that interacts with the Spt16 subunit of the yeast CP (Cdc68/Pob3)-FACT complex.</title>
        <authorList>
            <person name="John S."/>
            <person name="Howe L."/>
            <person name="Tafrov S.T."/>
            <person name="Grant P.A."/>
            <person name="Sternglanz R."/>
            <person name="Workman J.L."/>
        </authorList>
    </citation>
    <scope>INTERACTION WITH SAS3</scope>
</reference>
<reference key="12">
    <citation type="journal article" date="2001" name="EMBO J.">
        <title>Spt16-Pob3 and the HMG protein Nhp6 combine to form the nucleosome-binding factor SPN.</title>
        <authorList>
            <person name="Formosa T."/>
            <person name="Eriksson P."/>
            <person name="Wittmeyer J."/>
            <person name="Ginn J."/>
            <person name="Yu Y."/>
            <person name="Stillman D.J."/>
        </authorList>
    </citation>
    <scope>ASSOCIATION OF THE SPT16-POB3 DIMER WITH NHP6A/B AND NUCLEOSOMES</scope>
    <scope>FUNCTION OF THE FACT COMPLEX</scope>
    <scope>MUTAGENESIS OF PRO-565; PRO-570; 848-THR--ASP-850 AND PRO-920</scope>
</reference>
<reference key="13">
    <citation type="journal article" date="2001" name="Mol. Cell. Biol.">
        <title>A bipartite yeast SSRP1 analog comprised of Pob3 and Nhp6 proteins modulates transcription.</title>
        <authorList>
            <person name="Brewster N.K."/>
            <person name="Johnston G.C."/>
            <person name="Singer R.A."/>
        </authorList>
    </citation>
    <scope>ASSOCIATION OF THE SPT16-POB3 DIMER WITH NHP6A/B</scope>
</reference>
<reference key="14">
    <citation type="journal article" date="2002" name="EMBO J.">
        <title>The Paf1 complex physically and functionally associates with transcription elongation factors in vivo.</title>
        <authorList>
            <person name="Squazzo S.L."/>
            <person name="Costa P.J."/>
            <person name="Lindstrom D.L."/>
            <person name="Kumer K.E."/>
            <person name="Simic R."/>
            <person name="Jennings J.L."/>
            <person name="Link A.J."/>
            <person name="Arndt K.M."/>
            <person name="Hartzog G.A."/>
        </authorList>
    </citation>
    <scope>INTERACTION WITH PAF1 COMPLEX</scope>
</reference>
<reference key="15">
    <citation type="journal article" date="2002" name="Genetics">
        <title>Defects in SPT16 or POB3 (yFACT) in Saccharomyces cerevisiae cause dependence on the Hir/Hpc pathway: polymerase passage may degrade chromatin structure.</title>
        <authorList>
            <person name="Formosa T."/>
            <person name="Ruone S."/>
            <person name="Adams M.D."/>
            <person name="Olsen A.E."/>
            <person name="Eriksson P."/>
            <person name="Yu Y."/>
            <person name="Rhoades A.R."/>
            <person name="Kaufman P.D."/>
            <person name="Stillman D.J."/>
        </authorList>
    </citation>
    <scope>FUNCTION OF THE FACT COMPLEX</scope>
</reference>
<reference key="16">
    <citation type="journal article" date="2002" name="Mol. Cell. Biol.">
        <title>RNA polymerase II elongation factors of Saccharomyces cerevisiae: a targeted proteomics approach.</title>
        <authorList>
            <person name="Krogan N.J."/>
            <person name="Kim M."/>
            <person name="Ahn S.H."/>
            <person name="Zhong G."/>
            <person name="Kobor M.S."/>
            <person name="Cagney G."/>
            <person name="Emili A."/>
            <person name="Shilatifard A."/>
            <person name="Buratowski S."/>
            <person name="Greenblatt J.F."/>
        </authorList>
    </citation>
    <scope>INTERACTION WITH CHD1; CTR9; PAF1; CDC73; CKA1; CKA2; CKB1; CKB2 AND HISTONES</scope>
</reference>
<reference key="17">
    <citation type="journal article" date="2003" name="EMBO J.">
        <title>Chromatin remodeling protein Chd1 interacts with transcription elongation factors and localizes to transcribed genes.</title>
        <authorList>
            <person name="Simic R."/>
            <person name="Lindstrom D.L."/>
            <person name="Tran H.G."/>
            <person name="Roinick K.L."/>
            <person name="Costa P.J."/>
            <person name="Johnson A.D."/>
            <person name="Hartzog G.A."/>
            <person name="Arndt K.M."/>
        </authorList>
    </citation>
    <scope>INTERACTION WITH CHD1</scope>
</reference>
<reference key="18">
    <citation type="journal article" date="2003" name="J. Biol. Chem.">
        <title>Multiple Nhp6 molecules are required to recruit Spt16-Pob3 to form yFACT complexes and to reorganize nucleosomes.</title>
        <authorList>
            <person name="Ruone S."/>
            <person name="Rhoades A.R."/>
            <person name="Formosa T."/>
        </authorList>
    </citation>
    <scope>ASSOCIATION OF THE SPT16-POB3 DIMER WITH NHP6A/B</scope>
</reference>
<reference key="19">
    <citation type="journal article" date="2003" name="Mol. Cell. Biol.">
        <title>The FACT complex travels with elongating RNA polymerase II and is important for the fidelity of transcriptional initiation in vivo.</title>
        <authorList>
            <person name="Mason P.B."/>
            <person name="Struhl K."/>
        </authorList>
    </citation>
    <scope>FUNCTION OF THE FACT COMPLEX</scope>
    <scope>SUBCELLULAR LOCATION</scope>
</reference>
<reference key="20">
    <citation type="journal article" date="2004" name="Mol. Cell. Biol.">
        <authorList>
            <person name="Mason P.B."/>
            <person name="Struhl K."/>
        </authorList>
    </citation>
    <scope>ERRATUM OF PUBMED:14585989</scope>
</reference>
<reference key="21">
    <citation type="journal article" date="2003" name="Nature">
        <title>Global analysis of protein expression in yeast.</title>
        <authorList>
            <person name="Ghaemmaghami S."/>
            <person name="Huh W.-K."/>
            <person name="Bower K."/>
            <person name="Howson R.W."/>
            <person name="Belle A."/>
            <person name="Dephoure N."/>
            <person name="O'Shea E.K."/>
            <person name="Weissman J.S."/>
        </authorList>
    </citation>
    <scope>LEVEL OF PROTEIN EXPRESSION [LARGE SCALE ANALYSIS]</scope>
</reference>
<reference key="22">
    <citation type="journal article" date="2003" name="Science">
        <title>Transcription elongation factors repress transcription initiation from cryptic sites.</title>
        <authorList>
            <person name="Kaplan C.D."/>
            <person name="Laprade L."/>
            <person name="Winston F."/>
        </authorList>
    </citation>
    <scope>FUNCTION OF THE FACT COMPLEX</scope>
</reference>
<reference key="23">
    <citation type="journal article" date="2004" name="EMBO J.">
        <title>Transitions in RNA polymerase II elongation complexes at the 3' ends of genes.</title>
        <authorList>
            <person name="Kim M."/>
            <person name="Ahn S.-H."/>
            <person name="Krogan N.J."/>
            <person name="Greenblatt J.F."/>
            <person name="Buratowski S."/>
        </authorList>
    </citation>
    <scope>SUBCELLULAR LOCATION</scope>
</reference>
<reference key="24">
    <citation type="journal article" date="2004" name="Mol. Cell. Biol.">
        <title>Structural features of nucleosomes reorganized by yeast FACT and its HMG box component, Nhp6.</title>
        <authorList>
            <person name="Rhoades A.R."/>
            <person name="Ruone S."/>
            <person name="Formosa T."/>
        </authorList>
    </citation>
    <scope>FUNCTION OF THE FACT COMPLEX</scope>
</reference>
<reference key="25">
    <citation type="journal article" date="2005" name="Mol. Cell. Biol.">
        <title>The yeast FACT complex has a role in transcriptional initiation.</title>
        <authorList>
            <person name="Biswas D."/>
            <person name="Yu Y."/>
            <person name="Prall M."/>
            <person name="Formosa T."/>
            <person name="Stillman D.J."/>
        </authorList>
    </citation>
    <scope>FUNCTION OF THE FACT COMPLEX</scope>
</reference>
<reference key="26">
    <citation type="journal article" date="2008" name="Mol. Cell. Proteomics">
        <title>A multidimensional chromatography technology for in-depth phosphoproteome analysis.</title>
        <authorList>
            <person name="Albuquerque C.P."/>
            <person name="Smolka M.B."/>
            <person name="Payne S.H."/>
            <person name="Bafna V."/>
            <person name="Eng J."/>
            <person name="Zhou H."/>
        </authorList>
    </citation>
    <scope>PHOSPHORYLATION [LARGE SCALE ANALYSIS] AT SER-526 AND SER-765</scope>
    <scope>IDENTIFICATION BY MASS SPECTROMETRY [LARGE SCALE ANALYSIS]</scope>
</reference>
<reference key="27">
    <citation type="journal article" date="2009" name="Mol. Cell">
        <title>Two-color cell array screen reveals interdependent roles for histone chaperones and a chromatin boundary regulator in histone gene repression.</title>
        <authorList>
            <person name="Fillingham J."/>
            <person name="Kainth P."/>
            <person name="Lambert J.P."/>
            <person name="van Bakel H."/>
            <person name="Tsui K."/>
            <person name="Pena-Castillo L."/>
            <person name="Nislow C."/>
            <person name="Figeys D."/>
            <person name="Hughes T.R."/>
            <person name="Greenblatt J."/>
            <person name="Andrews B.J."/>
        </authorList>
    </citation>
    <scope>SUBCELLULAR LOCATION</scope>
</reference>
<reference key="28">
    <citation type="journal article" date="2009" name="Science">
        <title>Global analysis of Cdk1 substrate phosphorylation sites provides insights into evolution.</title>
        <authorList>
            <person name="Holt L.J."/>
            <person name="Tuch B.B."/>
            <person name="Villen J."/>
            <person name="Johnson A.D."/>
            <person name="Gygi S.P."/>
            <person name="Morgan D.O."/>
        </authorList>
    </citation>
    <scope>IDENTIFICATION BY MASS SPECTROMETRY [LARGE SCALE ANALYSIS]</scope>
</reference>
<reference key="29">
    <citation type="journal article" date="2011" name="Genes Dev.">
        <title>Restriction of histone gene transcription to S phase by phosphorylation of a chromatin boundary protein.</title>
        <authorList>
            <person name="Kurat C.F."/>
            <person name="Lambert J.P."/>
            <person name="van Dyk D."/>
            <person name="Tsui K."/>
            <person name="van Bakel H."/>
            <person name="Kaluarachchi S."/>
            <person name="Friesen H."/>
            <person name="Kainth P."/>
            <person name="Nislow C."/>
            <person name="Figeys D."/>
            <person name="Fillingham J."/>
            <person name="Andrews B.J."/>
        </authorList>
    </citation>
    <scope>INTERACTION WITH YTA7</scope>
</reference>